<name>RSMH_SYNY3</name>
<reference key="1">
    <citation type="journal article" date="1996" name="DNA Res.">
        <title>Sequence analysis of the genome of the unicellular cyanobacterium Synechocystis sp. strain PCC6803. II. Sequence determination of the entire genome and assignment of potential protein-coding regions.</title>
        <authorList>
            <person name="Kaneko T."/>
            <person name="Sato S."/>
            <person name="Kotani H."/>
            <person name="Tanaka A."/>
            <person name="Asamizu E."/>
            <person name="Nakamura Y."/>
            <person name="Miyajima N."/>
            <person name="Hirosawa M."/>
            <person name="Sugiura M."/>
            <person name="Sasamoto S."/>
            <person name="Kimura T."/>
            <person name="Hosouchi T."/>
            <person name="Matsuno A."/>
            <person name="Muraki A."/>
            <person name="Nakazaki N."/>
            <person name="Naruo K."/>
            <person name="Okumura S."/>
            <person name="Shimpo S."/>
            <person name="Takeuchi C."/>
            <person name="Wada T."/>
            <person name="Watanabe A."/>
            <person name="Yamada M."/>
            <person name="Yasuda M."/>
            <person name="Tabata S."/>
        </authorList>
    </citation>
    <scope>NUCLEOTIDE SEQUENCE [LARGE SCALE GENOMIC DNA]</scope>
    <source>
        <strain>ATCC 27184 / PCC 6803 / Kazusa</strain>
    </source>
</reference>
<organism>
    <name type="scientific">Synechocystis sp. (strain ATCC 27184 / PCC 6803 / Kazusa)</name>
    <dbReference type="NCBI Taxonomy" id="1111708"/>
    <lineage>
        <taxon>Bacteria</taxon>
        <taxon>Bacillati</taxon>
        <taxon>Cyanobacteriota</taxon>
        <taxon>Cyanophyceae</taxon>
        <taxon>Synechococcales</taxon>
        <taxon>Merismopediaceae</taxon>
        <taxon>Synechocystis</taxon>
    </lineage>
</organism>
<feature type="chain" id="PRO_0000108731" description="Ribosomal RNA small subunit methyltransferase H">
    <location>
        <begin position="1"/>
        <end position="305"/>
    </location>
</feature>
<feature type="binding site" evidence="1">
    <location>
        <begin position="49"/>
        <end position="51"/>
    </location>
    <ligand>
        <name>S-adenosyl-L-methionine</name>
        <dbReference type="ChEBI" id="CHEBI:59789"/>
    </ligand>
</feature>
<feature type="binding site" evidence="1">
    <location>
        <position position="68"/>
    </location>
    <ligand>
        <name>S-adenosyl-L-methionine</name>
        <dbReference type="ChEBI" id="CHEBI:59789"/>
    </ligand>
</feature>
<feature type="binding site" evidence="1">
    <location>
        <position position="100"/>
    </location>
    <ligand>
        <name>S-adenosyl-L-methionine</name>
        <dbReference type="ChEBI" id="CHEBI:59789"/>
    </ligand>
</feature>
<feature type="binding site" evidence="1">
    <location>
        <position position="116"/>
    </location>
    <ligand>
        <name>S-adenosyl-L-methionine</name>
        <dbReference type="ChEBI" id="CHEBI:59789"/>
    </ligand>
</feature>
<feature type="binding site" evidence="1">
    <location>
        <position position="123"/>
    </location>
    <ligand>
        <name>S-adenosyl-L-methionine</name>
        <dbReference type="ChEBI" id="CHEBI:59789"/>
    </ligand>
</feature>
<gene>
    <name evidence="1" type="primary">rsmH</name>
    <name type="synonym">mraW</name>
    <name type="ordered locus">sll1144</name>
</gene>
<keyword id="KW-0963">Cytoplasm</keyword>
<keyword id="KW-0489">Methyltransferase</keyword>
<keyword id="KW-1185">Reference proteome</keyword>
<keyword id="KW-0698">rRNA processing</keyword>
<keyword id="KW-0949">S-adenosyl-L-methionine</keyword>
<keyword id="KW-0808">Transferase</keyword>
<evidence type="ECO:0000255" key="1">
    <source>
        <dbReference type="HAMAP-Rule" id="MF_01007"/>
    </source>
</evidence>
<accession>P73460</accession>
<protein>
    <recommendedName>
        <fullName evidence="1">Ribosomal RNA small subunit methyltransferase H</fullName>
        <ecNumber evidence="1">2.1.1.199</ecNumber>
    </recommendedName>
    <alternativeName>
        <fullName evidence="1">16S rRNA m(4)C1402 methyltransferase</fullName>
    </alternativeName>
    <alternativeName>
        <fullName evidence="1">rRNA (cytosine-N(4)-)-methyltransferase RsmH</fullName>
    </alternativeName>
</protein>
<proteinExistence type="inferred from homology"/>
<sequence>MGAKSMEGMNLKQTAIADFHHVSVLPTALVEGLEPKPGGYYLDATVGAGGHSERLLKLGIPLALTMIDRDVQAIAAAMERLQPLVADRKDISINTWQGNFADFPGQLEQFDGIIADLGVSSPQLDQGDRGFSFRHTAPLDMRMDQSQDLTAAEIINHWSEKDLARIFYEYGEERLSRRIARQIVEQRPFQTTTDLAEAITKWVPGKYRHGRIHPATRTFQGLRIAVNDELGSLEKFIAQAPHWLKSGGKFGIISFHSLEDRIVKHRFRETENLRVLTKKPIIAGEEEQRQNPRARSAKLRWAEKI</sequence>
<dbReference type="EC" id="2.1.1.199" evidence="1"/>
<dbReference type="EMBL" id="BA000022">
    <property type="protein sequence ID" value="BAA17500.1"/>
    <property type="molecule type" value="Genomic_DNA"/>
</dbReference>
<dbReference type="PIR" id="S77397">
    <property type="entry name" value="S77397"/>
</dbReference>
<dbReference type="SMR" id="P73460"/>
<dbReference type="FunCoup" id="P73460">
    <property type="interactions" value="420"/>
</dbReference>
<dbReference type="STRING" id="1148.gene:10498365"/>
<dbReference type="PaxDb" id="1148-1652579"/>
<dbReference type="EnsemblBacteria" id="BAA17500">
    <property type="protein sequence ID" value="BAA17500"/>
    <property type="gene ID" value="BAA17500"/>
</dbReference>
<dbReference type="KEGG" id="syn:sll1144"/>
<dbReference type="eggNOG" id="COG0275">
    <property type="taxonomic scope" value="Bacteria"/>
</dbReference>
<dbReference type="InParanoid" id="P73460"/>
<dbReference type="PhylomeDB" id="P73460"/>
<dbReference type="Proteomes" id="UP000001425">
    <property type="component" value="Chromosome"/>
</dbReference>
<dbReference type="GO" id="GO:0005737">
    <property type="term" value="C:cytoplasm"/>
    <property type="evidence" value="ECO:0000318"/>
    <property type="project" value="GO_Central"/>
</dbReference>
<dbReference type="GO" id="GO:0071424">
    <property type="term" value="F:rRNA (cytosine-N4-)-methyltransferase activity"/>
    <property type="evidence" value="ECO:0000318"/>
    <property type="project" value="GO_Central"/>
</dbReference>
<dbReference type="GO" id="GO:0070475">
    <property type="term" value="P:rRNA base methylation"/>
    <property type="evidence" value="ECO:0000318"/>
    <property type="project" value="GO_Central"/>
</dbReference>
<dbReference type="FunFam" id="1.10.150.170:FF:000003">
    <property type="entry name" value="Ribosomal RNA small subunit methyltransferase H"/>
    <property type="match status" value="1"/>
</dbReference>
<dbReference type="Gene3D" id="1.10.150.170">
    <property type="entry name" value="Putative methyltransferase TM0872, insert domain"/>
    <property type="match status" value="1"/>
</dbReference>
<dbReference type="Gene3D" id="3.40.50.150">
    <property type="entry name" value="Vaccinia Virus protein VP39"/>
    <property type="match status" value="1"/>
</dbReference>
<dbReference type="HAMAP" id="MF_01007">
    <property type="entry name" value="16SrRNA_methyltr_H"/>
    <property type="match status" value="1"/>
</dbReference>
<dbReference type="InterPro" id="IPR002903">
    <property type="entry name" value="RsmH"/>
</dbReference>
<dbReference type="InterPro" id="IPR023397">
    <property type="entry name" value="SAM-dep_MeTrfase_MraW_recog"/>
</dbReference>
<dbReference type="InterPro" id="IPR029063">
    <property type="entry name" value="SAM-dependent_MTases_sf"/>
</dbReference>
<dbReference type="NCBIfam" id="TIGR00006">
    <property type="entry name" value="16S rRNA (cytosine(1402)-N(4))-methyltransferase RsmH"/>
    <property type="match status" value="1"/>
</dbReference>
<dbReference type="PANTHER" id="PTHR11265:SF0">
    <property type="entry name" value="12S RRNA N4-METHYLCYTIDINE METHYLTRANSFERASE"/>
    <property type="match status" value="1"/>
</dbReference>
<dbReference type="PANTHER" id="PTHR11265">
    <property type="entry name" value="S-ADENOSYL-METHYLTRANSFERASE MRAW"/>
    <property type="match status" value="1"/>
</dbReference>
<dbReference type="Pfam" id="PF01795">
    <property type="entry name" value="Methyltransf_5"/>
    <property type="match status" value="1"/>
</dbReference>
<dbReference type="PIRSF" id="PIRSF004486">
    <property type="entry name" value="MraW"/>
    <property type="match status" value="1"/>
</dbReference>
<dbReference type="SUPFAM" id="SSF81799">
    <property type="entry name" value="Putative methyltransferase TM0872, insert domain"/>
    <property type="match status" value="1"/>
</dbReference>
<dbReference type="SUPFAM" id="SSF53335">
    <property type="entry name" value="S-adenosyl-L-methionine-dependent methyltransferases"/>
    <property type="match status" value="1"/>
</dbReference>
<comment type="function">
    <text evidence="1">Specifically methylates the N4 position of cytidine in position 1402 (C1402) of 16S rRNA.</text>
</comment>
<comment type="catalytic activity">
    <reaction evidence="1">
        <text>cytidine(1402) in 16S rRNA + S-adenosyl-L-methionine = N(4)-methylcytidine(1402) in 16S rRNA + S-adenosyl-L-homocysteine + H(+)</text>
        <dbReference type="Rhea" id="RHEA:42928"/>
        <dbReference type="Rhea" id="RHEA-COMP:10286"/>
        <dbReference type="Rhea" id="RHEA-COMP:10287"/>
        <dbReference type="ChEBI" id="CHEBI:15378"/>
        <dbReference type="ChEBI" id="CHEBI:57856"/>
        <dbReference type="ChEBI" id="CHEBI:59789"/>
        <dbReference type="ChEBI" id="CHEBI:74506"/>
        <dbReference type="ChEBI" id="CHEBI:82748"/>
        <dbReference type="EC" id="2.1.1.199"/>
    </reaction>
</comment>
<comment type="subcellular location">
    <subcellularLocation>
        <location evidence="1">Cytoplasm</location>
    </subcellularLocation>
</comment>
<comment type="similarity">
    <text evidence="1">Belongs to the methyltransferase superfamily. RsmH family.</text>
</comment>